<reference key="1">
    <citation type="journal article" date="1996" name="J. Virol.">
        <title>Processing of rabbit hemorrhagic disease virus polyprotein.</title>
        <authorList>
            <person name="Martin-Alonso J.M."/>
            <person name="Casais R."/>
            <person name="Boga J.A."/>
            <person name="Parra F."/>
        </authorList>
    </citation>
    <scope>NUCLEOTIDE SEQUENCE [GENOMIC RNA]</scope>
    <scope>PROTEIN SEQUENCE OF 719-724 AND 1009-1114</scope>
    <scope>MUTAGENESIS OF GLU-1767</scope>
    <scope>PROTEOLYTIC PROCESSING (GENOME POLYPROTEIN)</scope>
</reference>
<reference key="2">
    <citation type="submission" date="2003-05" db="EMBL/GenBank/DDBJ databases">
        <authorList>
            <person name="Casais R."/>
            <person name="Martin-Alonso J.M."/>
            <person name="Boga J.A."/>
            <person name="Parra F."/>
        </authorList>
    </citation>
    <scope>SEQUENCE REVISION TO 1891; 2058 AND 2061</scope>
</reference>
<reference key="3">
    <citation type="journal article" date="1994" name="J. Gen. Virol.">
        <title>Molecular cloning, sequence and expression of the capsid protein gene from rabbit hemorrhagic disease virus (Spanish isolate AST/89).</title>
        <authorList>
            <person name="Boga J.A."/>
            <person name="Casais R."/>
            <person name="Marin M.S."/>
            <person name="Martin-Alonso J.M."/>
            <person name="Carmenes R."/>
            <person name="Prieto M."/>
            <person name="Parra F."/>
        </authorList>
    </citation>
    <scope>NUCLEOTIDE SEQUENCE [GENOMIC RNA] OF 1650-2344</scope>
</reference>
<reference key="4">
    <citation type="journal article" date="1993" name="Virus Res.">
        <title>The amino terminal sequence of VP60 from rabbit hemorrhagic disease virus supports its putative subgenomic origin.</title>
        <authorList>
            <person name="Parra F."/>
            <person name="Boga J.A."/>
            <person name="Marin M.S."/>
            <person name="Casais R."/>
        </authorList>
    </citation>
    <scope>NUCLEOTIDE SEQUENCE [MRNA] OF 1766-1797</scope>
    <scope>PROTEIN SEQUENCE OF 1767-1780</scope>
</reference>
<reference key="5">
    <citation type="journal article" date="1992" name="Virus Res.">
        <title>In vitro translation of a subgenomic mRNA from purified virions of the Spanish field isolate AST/89 of rabbit hemorrhagic disease virus (RHDV).</title>
        <authorList>
            <person name="Boga J.A."/>
            <person name="Marin M.S."/>
            <person name="Casais R."/>
            <person name="Prieto M."/>
            <person name="Parra F."/>
        </authorList>
    </citation>
    <scope>SUBGENOMIC ORIGIN OF VP60</scope>
</reference>
<reference key="6">
    <citation type="journal article" date="2001" name="J. Biol. Chem.">
        <title>Identification of the amino acid residue involved in rabbit hemorrhagic disease virus VPg uridylylation.</title>
        <authorList>
            <person name="Machin A."/>
            <person name="Martin Alonso J.M."/>
            <person name="Parra F."/>
        </authorList>
    </citation>
    <scope>COVALENT RNA LINKAGE AT TYR-1014 (VIRAL GENOME-LINKED PROTEIN)</scope>
    <scope>URIDYLYLATION AT TYR-1014 (VIRAL GENOME-LINKED PROTEIN)</scope>
    <scope>FUNCTION (RNA-DIRECTED RNA POLYMERASE)</scope>
</reference>
<reference key="7">
    <citation type="journal article" date="2004" name="J. Biol. Chem.">
        <title>Synthesis in vitro of rabbit hemorrhagic disease virus subgenomic RNA by internal initiation on (-)sense genomic RNA: mapping of a subgenomic promoter.</title>
        <authorList>
            <person name="Morales M."/>
            <person name="Barcena J."/>
            <person name="Ramirez M.A."/>
            <person name="Boga J.A."/>
            <person name="Parra F."/>
            <person name="Torres J.M."/>
        </authorList>
    </citation>
    <scope>SUBGENOMIC ORIGIN (CAPSID PROTEIN VP60)</scope>
</reference>
<reference key="8">
    <citation type="journal article" date="2008" name="J. Am. Chem. Soc.">
        <title>NMR experiments reveal the molecular basis of receptor recognition by a calicivirus.</title>
        <authorList>
            <person name="Rademacher C."/>
            <person name="Krishna N.R."/>
            <person name="Palcic M."/>
            <person name="Parra F."/>
            <person name="Peters T."/>
        </authorList>
    </citation>
    <scope>INTERACTION WITH HOST HISTO-BLOOD GROUP ANTIGENS (CAPSID PROTEIN VP60)</scope>
    <scope>FUNCTION (CAPSID PROTEIN VP60)</scope>
</reference>
<reference key="9">
    <citation type="journal article" date="2010" name="J. Virol.">
        <title>High-resolution cryo-electron microscopy structures of murine norovirus 1 and rabbit hemorrhagic disease virus reveal marked flexibility in the receptor binding domains.</title>
        <authorList>
            <person name="Katpally U."/>
            <person name="Voss N.R."/>
            <person name="Cavazza T."/>
            <person name="Taube S."/>
            <person name="Rubin J.R."/>
            <person name="Young V.L."/>
            <person name="Stuckey J."/>
            <person name="Ward V.K."/>
            <person name="Virgin H.W. IV"/>
            <person name="Wobus C.E."/>
            <person name="Smith T.J."/>
        </authorList>
    </citation>
    <scope>STRUCTURE BY ELECTRON MICROSCOPY (8.1 ANGSTROMS) OF THE VIRION</scope>
    <scope>FUNCTION (CAPSID PROTEIN VP60)</scope>
    <scope>SUBUNIT (CAPSID PROTEIN VP60)</scope>
</reference>
<keyword id="KW-0002">3D-structure</keyword>
<keyword id="KW-0877">Alternative promoter usage</keyword>
<keyword id="KW-0067">ATP-binding</keyword>
<keyword id="KW-0167">Capsid protein</keyword>
<keyword id="KW-0191">Covalent protein-RNA linkage</keyword>
<keyword id="KW-0903">Direct protein sequencing</keyword>
<keyword id="KW-1015">Disulfide bond</keyword>
<keyword id="KW-0347">Helicase</keyword>
<keyword id="KW-1035">Host cytoplasm</keyword>
<keyword id="KW-1038">Host endoplasmic reticulum</keyword>
<keyword id="KW-0378">Hydrolase</keyword>
<keyword id="KW-0547">Nucleotide-binding</keyword>
<keyword id="KW-0548">Nucleotidyltransferase</keyword>
<keyword id="KW-0597">Phosphoprotein</keyword>
<keyword id="KW-0645">Protease</keyword>
<keyword id="KW-0696">RNA-directed RNA polymerase</keyword>
<keyword id="KW-0788">Thiol protease</keyword>
<keyword id="KW-0808">Transferase</keyword>
<keyword id="KW-0693">Viral RNA replication</keyword>
<keyword id="KW-0946">Virion</keyword>
<proteinExistence type="evidence at protein level"/>
<evidence type="ECO:0000250" key="1"/>
<evidence type="ECO:0000250" key="2">
    <source>
        <dbReference type="UniProtKB" id="P27409"/>
    </source>
</evidence>
<evidence type="ECO:0000250" key="3">
    <source>
        <dbReference type="UniProtKB" id="P27410"/>
    </source>
</evidence>
<evidence type="ECO:0000250" key="4">
    <source>
        <dbReference type="UniProtKB" id="P27411"/>
    </source>
</evidence>
<evidence type="ECO:0000250" key="5">
    <source>
        <dbReference type="UniProtKB" id="P54634"/>
    </source>
</evidence>
<evidence type="ECO:0000250" key="6">
    <source>
        <dbReference type="UniProtKB" id="Q04544"/>
    </source>
</evidence>
<evidence type="ECO:0000250" key="7">
    <source>
        <dbReference type="UniProtKB" id="Q66914"/>
    </source>
</evidence>
<evidence type="ECO:0000255" key="8">
    <source>
        <dbReference type="PROSITE-ProRule" id="PRU00539"/>
    </source>
</evidence>
<evidence type="ECO:0000255" key="9">
    <source>
        <dbReference type="PROSITE-ProRule" id="PRU00551"/>
    </source>
</evidence>
<evidence type="ECO:0000255" key="10">
    <source>
        <dbReference type="PROSITE-ProRule" id="PRU01242"/>
    </source>
</evidence>
<evidence type="ECO:0000256" key="11">
    <source>
        <dbReference type="SAM" id="MobiDB-lite"/>
    </source>
</evidence>
<evidence type="ECO:0000269" key="12">
    <source>
    </source>
</evidence>
<evidence type="ECO:0000269" key="13">
    <source>
    </source>
</evidence>
<evidence type="ECO:0000269" key="14">
    <source>
    </source>
</evidence>
<evidence type="ECO:0000303" key="15">
    <source>
    </source>
</evidence>
<evidence type="ECO:0000305" key="16"/>
<comment type="function">
    <molecule>NS2</molecule>
    <text evidence="5 7">Together with NTPase and NS4, initiates the formation of the replication complex (By similarity). Induces the proliferation of the host smooth ER membranes forming long tubular structures (By similarity). These remodeled membranes probably form the viral factories that contain the replication complex (By similarity).</text>
</comment>
<comment type="function">
    <molecule>NTPase</molecule>
    <text evidence="5 6 7">Displays NTPase activity, but no helicase activity (By similarity). Induces the formation of convoluted membranes derived from the host ER (By similarity). These remodeled membranes probably form the viral factories that contain the replication complex (By similarity). Together with NS2 and NS4, initiates the formation of the replication complex (By similarity).</text>
</comment>
<comment type="function">
    <molecule>NS4</molecule>
    <text evidence="5 7">Probable key protein responsible for the formation of membrane alterations by the virus (By similarity). Induces the formation of convoluted membranes derived from the host ER (By similarity). These remodeled membranes probably form the viral factories that contain the replication complex (By similarity). Together with NS2 and NTPase, initiates the formation of the replication complex (By similarity).</text>
</comment>
<comment type="function">
    <molecule>Viral genome-linked protein</molecule>
    <text evidence="2">Viral genome-linked protein is covalently linked to the 5'-end of the positive-strand, negative-strand genomic RNAs and subgenomic RNA. Acts as a genome-linked replication primer. May recruit ribosome to viral RNA thereby promoting viral proteins translation. Interacts with host translation initiation complex to allow the translation of viral proteins.</text>
</comment>
<comment type="function">
    <molecule>3C-like protease</molecule>
    <text evidence="8">Processes the polyprotein. 3CLpro-RdRp is first released by autocleavage, then all other proteins are cleaved. May cleave polyadenylate-binding protein thereby inhibiting cellular translation.</text>
</comment>
<comment type="function">
    <molecule>RNA-directed RNA polymerase</molecule>
    <text evidence="12">Replicates genomic and antigenomic RNA by recognizing replications specific signals. Also transcribes a subgenomic mRNA by initiating RNA synthesis internally on antigenomic RNA. This sgRNA codes for structural proteins. Catalyzes the covalent attachment VPg with viral RNAs (PubMed:11369764).</text>
</comment>
<comment type="function">
    <molecule>Capsid protein VP60</molecule>
    <text evidence="1 13 15">Capsid protein VP60 self assembles to form an icosahedral capsid with a T=3 symmetry, about 35 nm in diameter, and consisting of 180 capsid proteins. A smaller form of capsid with a diameter of 23 nm might be capsid proteins assembled as icosahedron with T=1 symmetry (PubMed:20335264). The capsid encapsulate VP2 proteins and genomic or subgenomic RNA. Attaches virion to target cells by binding histo-blood group antigens, inducing endocytosis of the viral particle (PubMed:18302385). Acidification of the endosome induces conformational change of capsid protein thereby injecting virus genomic RNA into host cytoplasm (By similarity).</text>
</comment>
<comment type="catalytic activity">
    <molecule>NTPase</molecule>
    <reaction evidence="6">
        <text>a ribonucleoside 5'-triphosphate + H2O = a ribonucleoside 5'-diphosphate + phosphate + H(+)</text>
        <dbReference type="Rhea" id="RHEA:23680"/>
        <dbReference type="ChEBI" id="CHEBI:15377"/>
        <dbReference type="ChEBI" id="CHEBI:15378"/>
        <dbReference type="ChEBI" id="CHEBI:43474"/>
        <dbReference type="ChEBI" id="CHEBI:57930"/>
        <dbReference type="ChEBI" id="CHEBI:61557"/>
        <dbReference type="EC" id="3.6.1.15"/>
    </reaction>
</comment>
<comment type="catalytic activity">
    <molecule>3C-like protease</molecule>
    <reaction evidence="10">
        <text>Endopeptidase with a preference for cleavage when the P1 position is occupied by Glu-|-Xaa and the P1' position is occupied by Gly-|-Yaa.</text>
        <dbReference type="EC" id="3.4.22.66"/>
    </reaction>
</comment>
<comment type="catalytic activity">
    <molecule>RNA-directed RNA polymerase</molecule>
    <reaction evidence="8">
        <text>RNA(n) + a ribonucleoside 5'-triphosphate = RNA(n+1) + diphosphate</text>
        <dbReference type="Rhea" id="RHEA:21248"/>
        <dbReference type="Rhea" id="RHEA-COMP:14527"/>
        <dbReference type="Rhea" id="RHEA-COMP:17342"/>
        <dbReference type="ChEBI" id="CHEBI:33019"/>
        <dbReference type="ChEBI" id="CHEBI:61557"/>
        <dbReference type="ChEBI" id="CHEBI:140395"/>
        <dbReference type="EC" id="2.7.7.48"/>
    </reaction>
</comment>
<comment type="cofactor">
    <molecule>RNA-directed RNA polymerase</molecule>
    <cofactor evidence="3">
        <name>Mn(2+)</name>
        <dbReference type="ChEBI" id="CHEBI:29035"/>
    </cofactor>
</comment>
<comment type="subunit">
    <molecule>NS2</molecule>
    <text evidence="4">Homodimer.</text>
</comment>
<comment type="subunit">
    <molecule>Capsid protein VP60</molecule>
    <text evidence="13">Homomultimer (PubMed:18302385). Interacts with host type II histo-blood group structures antigens at the surface of target cells (PubMed:18302385).</text>
</comment>
<comment type="subcellular location">
    <molecule>NS1</molecule>
    <subcellularLocation>
        <location evidence="4">Host cytoplasm</location>
    </subcellularLocation>
</comment>
<comment type="subcellular location">
    <molecule>NS2</molecule>
    <subcellularLocation>
        <location evidence="4">Host cytoplasm</location>
    </subcellularLocation>
    <subcellularLocation>
        <location>Host endoplasmic reticulum</location>
    </subcellularLocation>
</comment>
<comment type="subcellular location">
    <molecule>NS4</molecule>
    <subcellularLocation>
        <location evidence="4">Host cytoplasm</location>
    </subcellularLocation>
</comment>
<comment type="subcellular location">
    <molecule>Capsid protein VP60</molecule>
    <subcellularLocation>
        <location>Virion</location>
    </subcellularLocation>
    <subcellularLocation>
        <location evidence="16">Host cytoplasm</location>
    </subcellularLocation>
</comment>
<comment type="alternative products">
    <event type="alternative promoter"/>
    <isoform>
        <id>Q86119-1</id>
        <name>Genome polyprotein</name>
        <sequence type="displayed"/>
    </isoform>
    <isoform>
        <id>Q86119-2</id>
        <name>Subgenomic capsid protein VP60</name>
        <name>VP1</name>
        <sequence type="described" ref="VSP_034379"/>
    </isoform>
</comment>
<comment type="PTM">
    <molecule>Genome polyprotein</molecule>
    <text evidence="3">Specific enzymatic cleavages by its own cysteine protease yield mature proteins (By similarity). The protease cleaves itself from the nascent polyprotein autocatalytically. Precursor p41 can be cleaved by viral 3CLpro into protein p19 and VPg, or cleaved by host protease into protein p23/2 and protein p18 (By similarity).</text>
</comment>
<comment type="PTM">
    <molecule>Viral genome-linked protein</molecule>
    <text evidence="7">VPg is uridylylated by the polymerase and is covalently attached to the 5'-end of the polyadenylated genomic and subgenomic RNAs. This uridylylated form acts as a nucleotide-peptide primer for the polymerase.</text>
</comment>
<comment type="miscellaneous">
    <text>Two different RNAs lead the expression of the capsid protein. One arises from the cleavage of the polyprotein translated from the genomic RNA and the other from the translation of a subgenomic RNA derived from the (-)RNA template. Capsid protein expressed from the subgenomic mRNA is produced in much larger amounts than the cleaved one.</text>
</comment>
<comment type="miscellaneous">
    <molecule>Isoform Genome polyprotein</molecule>
    <text>Produced from the genomic RNA.</text>
</comment>
<comment type="miscellaneous">
    <molecule>Isoform Subgenomic capsid protein VP60</molecule>
    <text evidence="16">Produced from the subgenomic RNA.</text>
</comment>
<feature type="chain" id="PRO_0000341999" description="Genome polyprotein">
    <location>
        <begin position="1"/>
        <end position="2344"/>
    </location>
</feature>
<feature type="chain" id="PRO_0000036941" description="NS1">
    <location>
        <begin position="1"/>
        <end position="143"/>
    </location>
</feature>
<feature type="chain" id="PRO_0000036942" description="NS2">
    <location>
        <begin position="144"/>
        <end position="339"/>
    </location>
</feature>
<feature type="chain" id="PRO_0000036943" description="NTPase">
    <location>
        <begin position="340"/>
        <end position="718"/>
    </location>
</feature>
<feature type="chain" id="PRO_0000342000" description="Precursor p41">
    <location>
        <begin position="719"/>
        <end position="1108"/>
    </location>
</feature>
<feature type="chain" id="PRO_0000036944" description="NS4">
    <location>
        <begin position="719"/>
        <end position="993"/>
    </location>
</feature>
<feature type="chain" id="PRO_0000342001" description="Protein p23/2">
    <location>
        <begin position="719"/>
        <end position="936"/>
    </location>
</feature>
<feature type="chain" id="PRO_0000342002" description="Protein p18">
    <location>
        <begin position="937"/>
        <end position="1108"/>
    </location>
</feature>
<feature type="chain" id="PRO_0000036945" description="Viral genome-linked protein">
    <location>
        <begin position="994"/>
        <end position="1108"/>
    </location>
</feature>
<feature type="chain" id="PRO_0000036946" description="3C-like protease">
    <location>
        <begin position="1109"/>
        <end position="1251"/>
    </location>
</feature>
<feature type="chain" id="PRO_0000036947" description="RNA-directed RNA polymerase">
    <location>
        <begin position="1252"/>
        <end position="1767"/>
    </location>
</feature>
<feature type="chain" id="PRO_0000036949" description="Capsid protein VP60">
    <location>
        <begin position="1768"/>
        <end position="2344"/>
    </location>
</feature>
<feature type="domain" description="SF3 helicase" evidence="9">
    <location>
        <begin position="492"/>
        <end position="653"/>
    </location>
</feature>
<feature type="domain" description="Peptidase C24" evidence="10">
    <location>
        <begin position="1109"/>
        <end position="1244"/>
    </location>
</feature>
<feature type="domain" description="RdRp catalytic" evidence="8">
    <location>
        <begin position="1495"/>
        <end position="1619"/>
    </location>
</feature>
<feature type="region of interest" description="Disordered" evidence="11">
    <location>
        <begin position="1771"/>
        <end position="1796"/>
    </location>
</feature>
<feature type="compositionally biased region" description="Low complexity" evidence="11">
    <location>
        <begin position="1778"/>
        <end position="1794"/>
    </location>
</feature>
<feature type="active site" description="For 3CLpro activity" evidence="10">
    <location>
        <position position="1135"/>
    </location>
</feature>
<feature type="active site" description="For 3CLpro activity" evidence="10">
    <location>
        <position position="1152"/>
    </location>
</feature>
<feature type="active site" description="For 3CLpro activity" evidence="10">
    <location>
        <position position="1212"/>
    </location>
</feature>
<feature type="binding site" evidence="9">
    <location>
        <begin position="522"/>
        <end position="529"/>
    </location>
    <ligand>
        <name>ATP</name>
        <dbReference type="ChEBI" id="CHEBI:30616"/>
    </ligand>
</feature>
<feature type="site" description="Cleavage; by 3CLpro" evidence="3">
    <location>
        <begin position="143"/>
        <end position="144"/>
    </location>
</feature>
<feature type="site" description="Cleavage; by Pro-Pol" evidence="3">
    <location>
        <begin position="339"/>
        <end position="340"/>
    </location>
</feature>
<feature type="site" description="Cleavage; by 3CLpro" evidence="3">
    <location>
        <begin position="718"/>
        <end position="719"/>
    </location>
</feature>
<feature type="site" description="Cleavage; by host" evidence="3">
    <location>
        <begin position="936"/>
        <end position="937"/>
    </location>
</feature>
<feature type="site" description="Cleavage; by Pro-Pol" evidence="3">
    <location>
        <begin position="993"/>
        <end position="994"/>
    </location>
</feature>
<feature type="site" description="Cleavage; by 3CLpro" evidence="3">
    <location>
        <begin position="1108"/>
        <end position="1109"/>
    </location>
</feature>
<feature type="site" description="Cleavage; by Pro-Pol" evidence="3">
    <location>
        <begin position="1251"/>
        <end position="1252"/>
    </location>
</feature>
<feature type="site" description="Cleavage; by Pro-Pol" evidence="3">
    <location>
        <begin position="1767"/>
        <end position="1768"/>
    </location>
</feature>
<feature type="modified residue" description="O-(5'-phospho-RNA)-tyrosine" evidence="12">
    <location>
        <position position="1014"/>
    </location>
</feature>
<feature type="modified residue" description="O-UMP-tyrosine; transient" evidence="12">
    <location>
        <position position="1014"/>
    </location>
</feature>
<feature type="disulfide bond" evidence="1">
    <location>
        <begin position="1584"/>
        <end position="1591"/>
    </location>
</feature>
<feature type="splice variant" id="VSP_034379" description="In isoform Subgenomic capsid protein VP60." evidence="16">
    <location>
        <begin position="1"/>
        <end position="1765"/>
    </location>
</feature>
<feature type="mutagenesis site" description="Loss of cleavage between RNA-directed RNA polymerase and VP60." evidence="14">
    <original>E</original>
    <variation>G</variation>
    <location>
        <position position="1767"/>
    </location>
</feature>
<organismHost>
    <name type="scientific">Oryctolagus cuniculus</name>
    <name type="common">Rabbit</name>
    <dbReference type="NCBI Taxonomy" id="9986"/>
</organismHost>
<protein>
    <recommendedName>
        <fullName>Genome polyprotein</fullName>
    </recommendedName>
    <alternativeName>
        <fullName>p254</fullName>
    </alternativeName>
    <component>
        <recommendedName>
            <fullName>NS1</fullName>
        </recommendedName>
        <alternativeName>
            <fullName>Protein p16</fullName>
        </alternativeName>
    </component>
    <component>
        <recommendedName>
            <fullName>NS2</fullName>
        </recommendedName>
        <alternativeName>
            <fullName>Protein p23</fullName>
        </alternativeName>
    </component>
    <component>
        <recommendedName>
            <fullName>NTPase</fullName>
            <ecNumber evidence="6">3.6.1.15</ecNumber>
        </recommendedName>
        <alternativeName>
            <fullName>2C-like protein</fullName>
        </alternativeName>
        <alternativeName>
            <fullName>NS3</fullName>
        </alternativeName>
        <alternativeName>
            <fullName>P2C</fullName>
        </alternativeName>
        <alternativeName>
            <fullName>p37</fullName>
        </alternativeName>
    </component>
    <component>
        <recommendedName>
            <fullName>Precursor p41</fullName>
        </recommendedName>
    </component>
    <component>
        <recommendedName>
            <fullName>NS4</fullName>
        </recommendedName>
        <alternativeName>
            <fullName>Protein p29</fullName>
        </alternativeName>
    </component>
    <component>
        <recommendedName>
            <fullName>Protein p23/2</fullName>
        </recommendedName>
    </component>
    <component>
        <recommendedName>
            <fullName>Protein p18</fullName>
        </recommendedName>
    </component>
    <component>
        <recommendedName>
            <fullName>Viral genome-linked protein</fullName>
        </recommendedName>
        <alternativeName>
            <fullName>NS5</fullName>
        </alternativeName>
        <alternativeName>
            <fullName>VPg</fullName>
        </alternativeName>
        <alternativeName>
            <fullName>p13</fullName>
        </alternativeName>
    </component>
    <component>
        <recommendedName>
            <fullName>3C-like protease</fullName>
            <shortName>3CLpro</shortName>
            <ecNumber>3.4.22.66</ecNumber>
        </recommendedName>
        <alternativeName>
            <fullName>Calicivirin</fullName>
        </alternativeName>
        <alternativeName>
            <fullName>NS6</fullName>
        </alternativeName>
        <alternativeName>
            <fullName>Thiol protease P3C</fullName>
        </alternativeName>
        <alternativeName>
            <fullName>p15</fullName>
        </alternativeName>
    </component>
    <component>
        <recommendedName>
            <fullName>RNA-directed RNA polymerase</fullName>
            <ecNumber>2.7.7.48</ecNumber>
        </recommendedName>
        <alternativeName>
            <fullName>3Dpol</fullName>
        </alternativeName>
        <alternativeName>
            <fullName>NS7</fullName>
        </alternativeName>
        <alternativeName>
            <fullName>p58</fullName>
        </alternativeName>
    </component>
    <component>
        <recommendedName>
            <fullName>Capsid protein VP60</fullName>
        </recommendedName>
    </component>
</protein>
<sequence>MAAMSRLTGMTTAILPEKKPLNFFLDLRDKTPPCCIRATGKLAWPVFLGQNGKEGPLETCNKCGKWLNGFGCFGLEDLGDVCLCSIAQQKHKFGPVCLCNRAYIHDCGRWRRRSRFLKHYKALNKVIPCAYQFDESFSTPVFEGEVDDLFVELGAPTSMGFMDKKLLKKGKKLMDKFVDVDEPCLTSRDASLLDSIASDNTIRAKLEEEYGVEMVQAARDRKDFMKNLRLALDNRPANPVTWYTKLGNITEKGKQWAKKVVYGACKVTDPLKTLASILLVGLHNVIAVDTTVMLSTFKPVNLLAILMDWTNDLTGFVTTLVRLLELYGVVQATVNLIVEGVKSFWDKVVCATDRCFDLLKRLFDTFEDSVPTGPTAGCLIFMAFVFSTVVGYLPNNSVITTFMKGAGKLTTFAGVIGAIRTLWITINQHMVAKDLTSIQQKVMTVVKMANEAATLDQLEIVSCLCSDLENTLTNRCTLPSYNQHLGILNASQKVISDLHTMVLGKINMTKQRPQPVAVIFKGAPGIGKTYLVHRIARDLGCQHPSTINFGLDHFDSYTGEEVAIADEFNTCGDGESWVELFIQMVNTNPCPLNCDKAENKNKVFNSKYLLCTTNSNMILNATHPRAGAFYRRVMIVEARNKAVESWQATRHGSKPGRSCYSKDMSHLTFQVYPHNMPAPGFVFVGDKLVKSQVAPREYKYSELLDLIKSEHPDVASFEGANRFNFVYPDAQYDQALLMWKQYFVMYGCVARLAKNFVDDIPYNQVHISRASDPKIEGCVEYQCKFQHLWRMVPQFVLGCVNMTNQLGTPLTQQQLDRITNGVEGVTVTTVNNILPFHSQTTLINPSFIKLIWAVRKHLKGLSGVTKVAQFIWRVMTNPVDAYGSLVRTLTGAATFSDDPVSTTIICSNCTIQIHSCGGLLVRYSRDPVPVASDNVDRGDQGVDVFTDPNLISGFSWRQIAHLFVEVISHLCANHLVNLATMAALGAVATKAFQGVKGKTKRGRGARVNLGNDEYDEWQAARREFVNAHDMTAEEYLAMKNKAAMGSDDQDSVMFRSWWTRRQLRPDEDQVTVVGRGGVRNEVIRTRVRQTPKGPKTLDDGGFYDNDYEGLPGFMRHNGSGWMIHIGNGLYISNTHTARSSCSEVVTCSPTTDLCLVKGEAIRSVAQIAEGTPVCDWKKSPISTYGIKKTLSDSTKIDVLAYDGCTQTTHGDCGLPLYDSSGKIVAIHTGKLLGFSKMCTLIDLTITKGVYETSNFFCGEPIDYRGITAHRLVGAEPRPPVSGTRYAKVPGVPEEYKTGYRPANLGRSDPDSDKSLMNIAVKNLQVYQQEPKLDKVDEFIERAAADVLGYLRFLTKGERQANLNFKAAFNTLDLSTSCGPFVPGKKIDHVKDGVMDQVHAKHLYKCWSVANSGKALHHIYACGLKDELRPLDKVKEGKKRLLWGCDVGVAVCAAAVFHNICYKLKMVARFGPIAVGVDMTSRDVDVIINNLTSKASDFLCLDYSKWDSTMSPCVVRLAIDILADCCEQTELTKSVVLTLKSHPMTILDAMIVQTKRGLPSGMPFTSVINSICHWLLWSAAVYKSCAEIGLHCSNLYEDAPFYTYGDDGVYAMTPMMVSLLPAIIENLRDYGLSPTAADKTEFIDVCPLNKISFLKRTFELTDIGWVSKLDKSSILRQLEWSKTTSRHMMIEETYDLAKEERGVQLEELQVAAAAHGQEFFNFVCKELERQQAYTQFSVYSYDAARKILADRKRVVSVVPDDEFVNVMEGKARTAPQGEAAGTATTASVPGTTTDGMDPGVVATTSVVTAENSSASIATAGIGGPPQQVDQQETWRTNFYYNDVFTWSVADAPGSILYTVQHSPQNNPFTAVLSQMYAGWAGGMQFRFIVAGSGVFGGRLVAAVIPPGIEIGPGLEVRQFPHVVIDARSLEPVTITMPDLRPNMYHPTGDPGLVPTLVLSVYNNLINPFGGSTSAIQVTVETRPSEDFEFVMIRAPSSKTVDSISPAGLLTTPVLTGVGNDNRWNGQIVGLQPVPGGFSTCNRHWNLNGSTYGWSSPRFADIDHRRGSASYPGNNATNVLQFWYANAGSAIDNPISQVAPDGFPDMSFVPFNGPGIPAAGWVGFGAIWNSNSGAPNVTTVQAYELGFATGAPGNLQPTTNTSGSQTVAKSIYAVVTGTAQNPAGLFVMASGVISTPSANAITYTPQPDRIVTTPGTPAAAPVGKNTPIMFASVVRRTGDVNATAGSANGTQYGTGSQPLPVTIGLSLNNYSSALMPGQFFVWQLTFASGFMEIGLSVDGYFYAGTGASTTLIDLTELIDVRPVGPRPSKSTLVFNLGGTANGFSYV</sequence>
<gene>
    <name type="ORF">ORF1</name>
</gene>
<name>POLG_RHDVA</name>
<dbReference type="EC" id="3.6.1.15" evidence="6"/>
<dbReference type="EC" id="3.4.22.66"/>
<dbReference type="EC" id="2.7.7.48"/>
<dbReference type="EMBL" id="Z49271">
    <property type="protein sequence ID" value="CAA89265.2"/>
    <property type="molecule type" value="Genomic_RNA"/>
</dbReference>
<dbReference type="EMBL" id="Z49271">
    <property type="protein sequence ID" value="CAD91718.1"/>
    <property type="molecule type" value="Genomic_RNA"/>
</dbReference>
<dbReference type="EMBL" id="Z24757">
    <property type="protein sequence ID" value="CAA80881.1"/>
    <property type="status" value="ALT_SEQ"/>
    <property type="molecule type" value="Genomic_RNA"/>
</dbReference>
<dbReference type="EMBL" id="Z24757">
    <property type="protein sequence ID" value="CAA80883.1"/>
    <property type="status" value="ALT_SEQ"/>
    <property type="molecule type" value="Genomic_RNA"/>
</dbReference>
<dbReference type="EMBL" id="X73046">
    <property type="protein sequence ID" value="CAA51524.1"/>
    <property type="molecule type" value="mRNA"/>
</dbReference>
<dbReference type="PIR" id="S64740">
    <property type="entry name" value="S64740"/>
</dbReference>
<dbReference type="PDB" id="3ZUE">
    <property type="method" value="EM"/>
    <property type="resolution" value="10.30 A"/>
    <property type="chains" value="A/B/C=1766-2344"/>
</dbReference>
<dbReference type="PDBsum" id="3ZUE"/>
<dbReference type="SMR" id="Q86119"/>
<dbReference type="MEROPS" id="C24.001"/>
<dbReference type="EvolutionaryTrace" id="Q86119"/>
<dbReference type="Proteomes" id="UP000008653">
    <property type="component" value="Genome"/>
</dbReference>
<dbReference type="GO" id="GO:0044165">
    <property type="term" value="C:host cell endoplasmic reticulum"/>
    <property type="evidence" value="ECO:0007669"/>
    <property type="project" value="UniProtKB-SubCell"/>
</dbReference>
<dbReference type="GO" id="GO:0019028">
    <property type="term" value="C:viral capsid"/>
    <property type="evidence" value="ECO:0007669"/>
    <property type="project" value="UniProtKB-KW"/>
</dbReference>
<dbReference type="GO" id="GO:0005524">
    <property type="term" value="F:ATP binding"/>
    <property type="evidence" value="ECO:0007669"/>
    <property type="project" value="UniProtKB-KW"/>
</dbReference>
<dbReference type="GO" id="GO:0004197">
    <property type="term" value="F:cysteine-type endopeptidase activity"/>
    <property type="evidence" value="ECO:0007669"/>
    <property type="project" value="InterPro"/>
</dbReference>
<dbReference type="GO" id="GO:0017111">
    <property type="term" value="F:ribonucleoside triphosphate phosphatase activity"/>
    <property type="evidence" value="ECO:0007669"/>
    <property type="project" value="UniProtKB-EC"/>
</dbReference>
<dbReference type="GO" id="GO:0003723">
    <property type="term" value="F:RNA binding"/>
    <property type="evidence" value="ECO:0007669"/>
    <property type="project" value="InterPro"/>
</dbReference>
<dbReference type="GO" id="GO:0003724">
    <property type="term" value="F:RNA helicase activity"/>
    <property type="evidence" value="ECO:0007669"/>
    <property type="project" value="InterPro"/>
</dbReference>
<dbReference type="GO" id="GO:0003968">
    <property type="term" value="F:RNA-directed RNA polymerase activity"/>
    <property type="evidence" value="ECO:0007669"/>
    <property type="project" value="UniProtKB-KW"/>
</dbReference>
<dbReference type="GO" id="GO:0006351">
    <property type="term" value="P:DNA-templated transcription"/>
    <property type="evidence" value="ECO:0007669"/>
    <property type="project" value="InterPro"/>
</dbReference>
<dbReference type="GO" id="GO:0006508">
    <property type="term" value="P:proteolysis"/>
    <property type="evidence" value="ECO:0007669"/>
    <property type="project" value="UniProtKB-KW"/>
</dbReference>
<dbReference type="GO" id="GO:0039694">
    <property type="term" value="P:viral RNA genome replication"/>
    <property type="evidence" value="ECO:0007669"/>
    <property type="project" value="InterPro"/>
</dbReference>
<dbReference type="CDD" id="cd00009">
    <property type="entry name" value="AAA"/>
    <property type="match status" value="1"/>
</dbReference>
<dbReference type="CDD" id="cd23192">
    <property type="entry name" value="Caliciviridae_RdRp"/>
    <property type="match status" value="1"/>
</dbReference>
<dbReference type="CDD" id="cd00205">
    <property type="entry name" value="rhv_like"/>
    <property type="match status" value="1"/>
</dbReference>
<dbReference type="Gene3D" id="1.10.260.110">
    <property type="match status" value="1"/>
</dbReference>
<dbReference type="Gene3D" id="1.20.960.20">
    <property type="match status" value="1"/>
</dbReference>
<dbReference type="Gene3D" id="2.60.120.20">
    <property type="match status" value="1"/>
</dbReference>
<dbReference type="Gene3D" id="3.30.70.270">
    <property type="match status" value="1"/>
</dbReference>
<dbReference type="Gene3D" id="4.10.8.20">
    <property type="entry name" value="DNA/RNA polymerases"/>
    <property type="match status" value="1"/>
</dbReference>
<dbReference type="Gene3D" id="3.40.50.300">
    <property type="entry name" value="P-loop containing nucleotide triphosphate hydrolases"/>
    <property type="match status" value="1"/>
</dbReference>
<dbReference type="InterPro" id="IPR004005">
    <property type="entry name" value="Calicivirus_coat"/>
</dbReference>
<dbReference type="InterPro" id="IPR043502">
    <property type="entry name" value="DNA/RNA_pol_sf"/>
</dbReference>
<dbReference type="InterPro" id="IPR004004">
    <property type="entry name" value="Helic/Pol/Pept_Calicivir-typ"/>
</dbReference>
<dbReference type="InterPro" id="IPR000605">
    <property type="entry name" value="Helicase_SF3_ssDNA/RNA_vir"/>
</dbReference>
<dbReference type="InterPro" id="IPR014759">
    <property type="entry name" value="Helicase_SF3_ssRNA_vir"/>
</dbReference>
<dbReference type="InterPro" id="IPR027417">
    <property type="entry name" value="P-loop_NTPase"/>
</dbReference>
<dbReference type="InterPro" id="IPR000317">
    <property type="entry name" value="Peptidase_C24"/>
</dbReference>
<dbReference type="InterPro" id="IPR009003">
    <property type="entry name" value="Peptidase_S1_PA"/>
</dbReference>
<dbReference type="InterPro" id="IPR043128">
    <property type="entry name" value="Rev_trsase/Diguanyl_cyclase"/>
</dbReference>
<dbReference type="InterPro" id="IPR033703">
    <property type="entry name" value="Rhv-like"/>
</dbReference>
<dbReference type="InterPro" id="IPR001205">
    <property type="entry name" value="RNA-dir_pol_C"/>
</dbReference>
<dbReference type="InterPro" id="IPR007094">
    <property type="entry name" value="RNA-dir_pol_PSvirus"/>
</dbReference>
<dbReference type="InterPro" id="IPR029053">
    <property type="entry name" value="Viral_coat"/>
</dbReference>
<dbReference type="InterPro" id="IPR049434">
    <property type="entry name" value="VPg"/>
</dbReference>
<dbReference type="Pfam" id="PF00915">
    <property type="entry name" value="Calici_coat"/>
    <property type="match status" value="1"/>
</dbReference>
<dbReference type="Pfam" id="PF03510">
    <property type="entry name" value="Peptidase_C24"/>
    <property type="match status" value="1"/>
</dbReference>
<dbReference type="Pfam" id="PF00680">
    <property type="entry name" value="RdRP_1"/>
    <property type="match status" value="1"/>
</dbReference>
<dbReference type="Pfam" id="PF00910">
    <property type="entry name" value="RNA_helicase"/>
    <property type="match status" value="1"/>
</dbReference>
<dbReference type="Pfam" id="PF20915">
    <property type="entry name" value="VPg"/>
    <property type="match status" value="1"/>
</dbReference>
<dbReference type="PRINTS" id="PR00916">
    <property type="entry name" value="2CENDOPTASE"/>
</dbReference>
<dbReference type="PRINTS" id="PR00918">
    <property type="entry name" value="CALICVIRUSNS"/>
</dbReference>
<dbReference type="SUPFAM" id="SSF56672">
    <property type="entry name" value="DNA/RNA polymerases"/>
    <property type="match status" value="1"/>
</dbReference>
<dbReference type="SUPFAM" id="SSF52540">
    <property type="entry name" value="P-loop containing nucleoside triphosphate hydrolases"/>
    <property type="match status" value="1"/>
</dbReference>
<dbReference type="SUPFAM" id="SSF88633">
    <property type="entry name" value="Positive stranded ssRNA viruses"/>
    <property type="match status" value="1"/>
</dbReference>
<dbReference type="SUPFAM" id="SSF50494">
    <property type="entry name" value="Trypsin-like serine proteases"/>
    <property type="match status" value="1"/>
</dbReference>
<dbReference type="PROSITE" id="PS51894">
    <property type="entry name" value="CV_3CL_PRO"/>
    <property type="match status" value="1"/>
</dbReference>
<dbReference type="PROSITE" id="PS50507">
    <property type="entry name" value="RDRP_SSRNA_POS"/>
    <property type="match status" value="1"/>
</dbReference>
<dbReference type="PROSITE" id="PS51218">
    <property type="entry name" value="SF3_HELICASE_2"/>
    <property type="match status" value="1"/>
</dbReference>
<organism>
    <name type="scientific">Rabbit hemorrhagic disease virus (strain AST89)</name>
    <name type="common">Ra/LV/RHDV/AST89/1989/SP</name>
    <name type="synonym">RHDV-AST89</name>
    <dbReference type="NCBI Taxonomy" id="314538"/>
    <lineage>
        <taxon>Viruses</taxon>
        <taxon>Riboviria</taxon>
        <taxon>Orthornavirae</taxon>
        <taxon>Pisuviricota</taxon>
        <taxon>Pisoniviricetes</taxon>
        <taxon>Picornavirales</taxon>
        <taxon>Caliciviridae</taxon>
        <taxon>Lagovirus</taxon>
        <taxon>Rabbit hemorrhagic disease virus</taxon>
    </lineage>
</organism>
<accession>Q86119</accession>
<accession>Q7THT7</accession>
<accession>Q86123</accession>
<accession>Q86124</accession>
<accession>Q9IBM0</accession>